<proteinExistence type="predicted"/>
<evidence type="ECO:0000256" key="1">
    <source>
        <dbReference type="SAM" id="MobiDB-lite"/>
    </source>
</evidence>
<evidence type="ECO:0000312" key="2">
    <source>
        <dbReference type="WormBase" id="ZC21.3a"/>
    </source>
</evidence>
<accession>P34587</accession>
<gene>
    <name evidence="2" type="primary">idpp-15</name>
    <name evidence="2" type="ORF">ZC21.3</name>
</gene>
<protein>
    <recommendedName>
        <fullName evidence="2">Intrinsically disordered protein, expressed in pharynx 15</fullName>
    </recommendedName>
</protein>
<name>YN53_CAEEL</name>
<feature type="chain" id="PRO_0000065493" description="Intrinsically disordered protein, expressed in pharynx 15">
    <location>
        <begin position="1"/>
        <end position="139"/>
    </location>
</feature>
<feature type="region of interest" description="Disordered" evidence="1">
    <location>
        <begin position="1"/>
        <end position="98"/>
    </location>
</feature>
<feature type="compositionally biased region" description="Polar residues" evidence="1">
    <location>
        <begin position="1"/>
        <end position="12"/>
    </location>
</feature>
<feature type="compositionally biased region" description="Low complexity" evidence="1">
    <location>
        <begin position="13"/>
        <end position="41"/>
    </location>
</feature>
<feature type="compositionally biased region" description="Low complexity" evidence="1">
    <location>
        <begin position="49"/>
        <end position="98"/>
    </location>
</feature>
<reference key="1">
    <citation type="journal article" date="1994" name="Nature">
        <title>2.2 Mb of contiguous nucleotide sequence from chromosome III of C. elegans.</title>
        <authorList>
            <person name="Wilson R."/>
            <person name="Ainscough R."/>
            <person name="Anderson K."/>
            <person name="Baynes C."/>
            <person name="Berks M."/>
            <person name="Bonfield J."/>
            <person name="Burton J."/>
            <person name="Connell M."/>
            <person name="Copsey T."/>
            <person name="Cooper J."/>
            <person name="Coulson A."/>
            <person name="Craxton M."/>
            <person name="Dear S."/>
            <person name="Du Z."/>
            <person name="Durbin R."/>
            <person name="Favello A."/>
            <person name="Fraser A."/>
            <person name="Fulton L."/>
            <person name="Gardner A."/>
            <person name="Green P."/>
            <person name="Hawkins T."/>
            <person name="Hillier L."/>
            <person name="Jier M."/>
            <person name="Johnston L."/>
            <person name="Jones M."/>
            <person name="Kershaw J."/>
            <person name="Kirsten J."/>
            <person name="Laisster N."/>
            <person name="Latreille P."/>
            <person name="Lightning J."/>
            <person name="Lloyd C."/>
            <person name="Mortimore B."/>
            <person name="O'Callaghan M."/>
            <person name="Parsons J."/>
            <person name="Percy C."/>
            <person name="Rifken L."/>
            <person name="Roopra A."/>
            <person name="Saunders D."/>
            <person name="Shownkeen R."/>
            <person name="Sims M."/>
            <person name="Smaldon N."/>
            <person name="Smith A."/>
            <person name="Smith M."/>
            <person name="Sonnhammer E."/>
            <person name="Staden R."/>
            <person name="Sulston J."/>
            <person name="Thierry-Mieg J."/>
            <person name="Thomas K."/>
            <person name="Vaudin M."/>
            <person name="Vaughan K."/>
            <person name="Waterston R."/>
            <person name="Watson A."/>
            <person name="Weinstock L."/>
            <person name="Wilkinson-Sproat J."/>
            <person name="Wohldman P."/>
        </authorList>
    </citation>
    <scope>NUCLEOTIDE SEQUENCE [LARGE SCALE GENOMIC DNA]</scope>
    <source>
        <strain>Bristol N2</strain>
    </source>
</reference>
<reference key="2">
    <citation type="journal article" date="1998" name="Science">
        <title>Genome sequence of the nematode C. elegans: a platform for investigating biology.</title>
        <authorList>
            <consortium name="The C. elegans sequencing consortium"/>
        </authorList>
    </citation>
    <scope>NUCLEOTIDE SEQUENCE [LARGE SCALE GENOMIC DNA]</scope>
    <source>
        <strain>Bristol N2</strain>
    </source>
</reference>
<dbReference type="EMBL" id="BX284603">
    <property type="protein sequence ID" value="CCD62580.2"/>
    <property type="molecule type" value="Genomic_DNA"/>
</dbReference>
<dbReference type="PIR" id="S44874">
    <property type="entry name" value="S44874"/>
</dbReference>
<dbReference type="RefSeq" id="NP_498880.2">
    <property type="nucleotide sequence ID" value="NM_066479.4"/>
</dbReference>
<dbReference type="FunCoup" id="P34587">
    <property type="interactions" value="1545"/>
</dbReference>
<dbReference type="STRING" id="6239.ZC21.3b.1"/>
<dbReference type="PaxDb" id="6239-ZC21.3b"/>
<dbReference type="EnsemblMetazoa" id="ZC21.3a.1">
    <property type="protein sequence ID" value="ZC21.3a.1"/>
    <property type="gene ID" value="WBGene00022505"/>
</dbReference>
<dbReference type="AGR" id="WB:WBGene00022505"/>
<dbReference type="WormBase" id="ZC21.3a">
    <property type="protein sequence ID" value="CE54114"/>
    <property type="gene ID" value="WBGene00022505"/>
    <property type="gene designation" value="idpp-15"/>
</dbReference>
<dbReference type="eggNOG" id="ENOG502RVU6">
    <property type="taxonomic scope" value="Eukaryota"/>
</dbReference>
<dbReference type="InParanoid" id="P34587"/>
<dbReference type="PRO" id="PR:P34587"/>
<dbReference type="Proteomes" id="UP000001940">
    <property type="component" value="Chromosome III"/>
</dbReference>
<dbReference type="Bgee" id="WBGene00022505">
    <property type="expression patterns" value="Expressed in larva and 3 other cell types or tissues"/>
</dbReference>
<dbReference type="ExpressionAtlas" id="P34587">
    <property type="expression patterns" value="baseline and differential"/>
</dbReference>
<sequence length="139" mass="15946">MNNNQGMYNTQTTQGYGNNQGSYQNQMMYNNNNPQNTQTTTFLYASSIQPQQQQQQQQYNNQYNNQQMNSNGYNNQPMYDQSYSTQQYGSSTPSPQYSADSISCCSQVSSTCCYQTQQGYNTPSNNVQYSPSVYQYGRK</sequence>
<keyword id="KW-1185">Reference proteome</keyword>
<organism>
    <name type="scientific">Caenorhabditis elegans</name>
    <dbReference type="NCBI Taxonomy" id="6239"/>
    <lineage>
        <taxon>Eukaryota</taxon>
        <taxon>Metazoa</taxon>
        <taxon>Ecdysozoa</taxon>
        <taxon>Nematoda</taxon>
        <taxon>Chromadorea</taxon>
        <taxon>Rhabditida</taxon>
        <taxon>Rhabditina</taxon>
        <taxon>Rhabditomorpha</taxon>
        <taxon>Rhabditoidea</taxon>
        <taxon>Rhabditidae</taxon>
        <taxon>Peloderinae</taxon>
        <taxon>Caenorhabditis</taxon>
    </lineage>
</organism>